<evidence type="ECO:0000250" key="1"/>
<evidence type="ECO:0000255" key="2"/>
<evidence type="ECO:0000255" key="3">
    <source>
        <dbReference type="PROSITE-ProRule" id="PRU00289"/>
    </source>
</evidence>
<evidence type="ECO:0000256" key="4">
    <source>
        <dbReference type="SAM" id="MobiDB-lite"/>
    </source>
</evidence>
<evidence type="ECO:0000305" key="5"/>
<keyword id="KW-0067">ATP-binding</keyword>
<keyword id="KW-0131">Cell cycle</keyword>
<keyword id="KW-0132">Cell division</keyword>
<keyword id="KW-1003">Cell membrane</keyword>
<keyword id="KW-0159">Chromosome partition</keyword>
<keyword id="KW-0238">DNA-binding</keyword>
<keyword id="KW-0472">Membrane</keyword>
<keyword id="KW-0547">Nucleotide-binding</keyword>
<keyword id="KW-1185">Reference proteome</keyword>
<keyword id="KW-0812">Transmembrane</keyword>
<keyword id="KW-1133">Transmembrane helix</keyword>
<gene>
    <name type="primary">ftsK</name>
    <name type="ordered locus">OB1614</name>
</gene>
<dbReference type="EMBL" id="BA000028">
    <property type="protein sequence ID" value="BAC13570.1"/>
    <property type="molecule type" value="Genomic_DNA"/>
</dbReference>
<dbReference type="RefSeq" id="WP_011066014.1">
    <property type="nucleotide sequence ID" value="NC_004193.1"/>
</dbReference>
<dbReference type="SMR" id="Q8EQS7"/>
<dbReference type="STRING" id="221109.gene:10733854"/>
<dbReference type="KEGG" id="oih:OB1614"/>
<dbReference type="eggNOG" id="COG1674">
    <property type="taxonomic scope" value="Bacteria"/>
</dbReference>
<dbReference type="HOGENOM" id="CLU_001981_9_6_9"/>
<dbReference type="OrthoDB" id="9807790at2"/>
<dbReference type="PhylomeDB" id="Q8EQS7"/>
<dbReference type="Proteomes" id="UP000000822">
    <property type="component" value="Chromosome"/>
</dbReference>
<dbReference type="GO" id="GO:0005886">
    <property type="term" value="C:plasma membrane"/>
    <property type="evidence" value="ECO:0007669"/>
    <property type="project" value="UniProtKB-SubCell"/>
</dbReference>
<dbReference type="GO" id="GO:0005524">
    <property type="term" value="F:ATP binding"/>
    <property type="evidence" value="ECO:0007669"/>
    <property type="project" value="UniProtKB-KW"/>
</dbReference>
<dbReference type="GO" id="GO:0016887">
    <property type="term" value="F:ATP hydrolysis activity"/>
    <property type="evidence" value="ECO:0007669"/>
    <property type="project" value="InterPro"/>
</dbReference>
<dbReference type="GO" id="GO:0003677">
    <property type="term" value="F:DNA binding"/>
    <property type="evidence" value="ECO:0007669"/>
    <property type="project" value="UniProtKB-KW"/>
</dbReference>
<dbReference type="GO" id="GO:0051301">
    <property type="term" value="P:cell division"/>
    <property type="evidence" value="ECO:0007669"/>
    <property type="project" value="UniProtKB-KW"/>
</dbReference>
<dbReference type="GO" id="GO:0007059">
    <property type="term" value="P:chromosome segregation"/>
    <property type="evidence" value="ECO:0007669"/>
    <property type="project" value="UniProtKB-KW"/>
</dbReference>
<dbReference type="CDD" id="cd01127">
    <property type="entry name" value="TrwB_TraG_TraD_VirD4"/>
    <property type="match status" value="1"/>
</dbReference>
<dbReference type="Gene3D" id="3.30.980.40">
    <property type="match status" value="1"/>
</dbReference>
<dbReference type="Gene3D" id="3.40.50.300">
    <property type="entry name" value="P-loop containing nucleotide triphosphate hydrolases"/>
    <property type="match status" value="1"/>
</dbReference>
<dbReference type="Gene3D" id="1.10.10.10">
    <property type="entry name" value="Winged helix-like DNA-binding domain superfamily/Winged helix DNA-binding domain"/>
    <property type="match status" value="1"/>
</dbReference>
<dbReference type="InterPro" id="IPR003593">
    <property type="entry name" value="AAA+_ATPase"/>
</dbReference>
<dbReference type="InterPro" id="IPR050206">
    <property type="entry name" value="FtsK/SpoIIIE/SftA"/>
</dbReference>
<dbReference type="InterPro" id="IPR041027">
    <property type="entry name" value="FtsK_alpha"/>
</dbReference>
<dbReference type="InterPro" id="IPR002543">
    <property type="entry name" value="FtsK_dom"/>
</dbReference>
<dbReference type="InterPro" id="IPR018541">
    <property type="entry name" value="Ftsk_gamma"/>
</dbReference>
<dbReference type="InterPro" id="IPR027417">
    <property type="entry name" value="P-loop_NTPase"/>
</dbReference>
<dbReference type="InterPro" id="IPR036388">
    <property type="entry name" value="WH-like_DNA-bd_sf"/>
</dbReference>
<dbReference type="InterPro" id="IPR036390">
    <property type="entry name" value="WH_DNA-bd_sf"/>
</dbReference>
<dbReference type="PANTHER" id="PTHR22683:SF41">
    <property type="entry name" value="DNA TRANSLOCASE FTSK"/>
    <property type="match status" value="1"/>
</dbReference>
<dbReference type="PANTHER" id="PTHR22683">
    <property type="entry name" value="SPORULATION PROTEIN RELATED"/>
    <property type="match status" value="1"/>
</dbReference>
<dbReference type="Pfam" id="PF17854">
    <property type="entry name" value="FtsK_alpha"/>
    <property type="match status" value="1"/>
</dbReference>
<dbReference type="Pfam" id="PF09397">
    <property type="entry name" value="FtsK_gamma"/>
    <property type="match status" value="1"/>
</dbReference>
<dbReference type="Pfam" id="PF01580">
    <property type="entry name" value="FtsK_SpoIIIE"/>
    <property type="match status" value="1"/>
</dbReference>
<dbReference type="SMART" id="SM00382">
    <property type="entry name" value="AAA"/>
    <property type="match status" value="1"/>
</dbReference>
<dbReference type="SMART" id="SM00843">
    <property type="entry name" value="Ftsk_gamma"/>
    <property type="match status" value="1"/>
</dbReference>
<dbReference type="SUPFAM" id="SSF52540">
    <property type="entry name" value="P-loop containing nucleoside triphosphate hydrolases"/>
    <property type="match status" value="1"/>
</dbReference>
<dbReference type="SUPFAM" id="SSF46785">
    <property type="entry name" value="Winged helix' DNA-binding domain"/>
    <property type="match status" value="1"/>
</dbReference>
<dbReference type="PROSITE" id="PS50901">
    <property type="entry name" value="FTSK"/>
    <property type="match status" value="1"/>
</dbReference>
<accession>Q8EQS7</accession>
<proteinExistence type="inferred from homology"/>
<comment type="function">
    <text evidence="1">Essential cell division protein that coordinates cell division and chromosome segregation. The N-terminus is involved in assembly of the cell-division machinery. The C-terminus functions as a DNA motor that moves dsDNA in an ATP-dependent manner towards the dif recombination site, which is located within the replication terminus region. Required for activation of the Xer recombinase, allowing activation of chromosome unlinking by recombination (By similarity).</text>
</comment>
<comment type="subunit">
    <text evidence="1">Homohexamer. Forms a ring that surrounds DNA (By similarity).</text>
</comment>
<comment type="subcellular location">
    <subcellularLocation>
        <location evidence="1">Cell membrane</location>
        <topology evidence="1">Multi-pass membrane protein</topology>
    </subcellularLocation>
    <text evidence="1">Located at the septum.</text>
</comment>
<comment type="domain">
    <text evidence="1">Consists of an N-terminal domain, which is sufficient for the localization to the septal ring and is required for cell division, followed by a linker domain, and a C-terminal domain, which forms the translocation motor involved in chromosome segregation. The C-terminal domain can be further subdivided into alpha, beta and gamma subdomains. The alpha and beta subdomains form the DNA pump, and the gamma subdomain is a regulatory subdomain (By similarity).</text>
</comment>
<comment type="similarity">
    <text evidence="5">Belongs to the FtsK/SpoIIIE/SftA family.</text>
</comment>
<reference key="1">
    <citation type="journal article" date="2002" name="Nucleic Acids Res.">
        <title>Genome sequence of Oceanobacillus iheyensis isolated from the Iheya Ridge and its unexpected adaptive capabilities to extreme environments.</title>
        <authorList>
            <person name="Takami H."/>
            <person name="Takaki Y."/>
            <person name="Uchiyama I."/>
        </authorList>
    </citation>
    <scope>NUCLEOTIDE SEQUENCE [LARGE SCALE GENOMIC DNA]</scope>
    <source>
        <strain>DSM 14371 / CIP 107618 / JCM 11309 / KCTC 3954 / HTE831</strain>
    </source>
</reference>
<organism>
    <name type="scientific">Oceanobacillus iheyensis (strain DSM 14371 / CIP 107618 / JCM 11309 / KCTC 3954 / HTE831)</name>
    <dbReference type="NCBI Taxonomy" id="221109"/>
    <lineage>
        <taxon>Bacteria</taxon>
        <taxon>Bacillati</taxon>
        <taxon>Bacillota</taxon>
        <taxon>Bacilli</taxon>
        <taxon>Bacillales</taxon>
        <taxon>Bacillaceae</taxon>
        <taxon>Oceanobacillus</taxon>
    </lineage>
</organism>
<name>FTSK_OCEIH</name>
<feature type="chain" id="PRO_0000098276" description="DNA translocase FtsK">
    <location>
        <begin position="1"/>
        <end position="782"/>
    </location>
</feature>
<feature type="transmembrane region" description="Helical" evidence="2">
    <location>
        <begin position="21"/>
        <end position="41"/>
    </location>
</feature>
<feature type="transmembrane region" description="Helical" evidence="2">
    <location>
        <begin position="56"/>
        <end position="76"/>
    </location>
</feature>
<feature type="transmembrane region" description="Helical" evidence="2">
    <location>
        <begin position="90"/>
        <end position="110"/>
    </location>
</feature>
<feature type="transmembrane region" description="Helical" evidence="2">
    <location>
        <begin position="143"/>
        <end position="163"/>
    </location>
</feature>
<feature type="transmembrane region" description="Helical" evidence="2">
    <location>
        <begin position="166"/>
        <end position="186"/>
    </location>
</feature>
<feature type="topological domain" description="Cytoplasmic" evidence="2">
    <location>
        <begin position="187"/>
        <end position="782"/>
    </location>
</feature>
<feature type="domain" description="FtsK" evidence="3">
    <location>
        <begin position="444"/>
        <end position="640"/>
    </location>
</feature>
<feature type="region of interest" description="Disordered" evidence="4">
    <location>
        <begin position="264"/>
        <end position="300"/>
    </location>
</feature>
<feature type="region of interest" description="Disordered" evidence="4">
    <location>
        <begin position="760"/>
        <end position="782"/>
    </location>
</feature>
<feature type="compositionally biased region" description="Polar residues" evidence="4">
    <location>
        <begin position="264"/>
        <end position="280"/>
    </location>
</feature>
<feature type="compositionally biased region" description="Basic and acidic residues" evidence="4">
    <location>
        <begin position="281"/>
        <end position="300"/>
    </location>
</feature>
<feature type="binding site" evidence="3">
    <location>
        <begin position="464"/>
        <end position="469"/>
    </location>
    <ligand>
        <name>ATP</name>
        <dbReference type="ChEBI" id="CHEBI:30616"/>
    </ligand>
</feature>
<protein>
    <recommendedName>
        <fullName>DNA translocase FtsK</fullName>
    </recommendedName>
</protein>
<sequence>MAAKKRKKKRKNSKQVKRLKIELVGLLLIFLAIFGSGAAALSDGAIPGWLENLFQFFFGIWYFIASVFLLVTGFYLLVKRKLPDFLHRRMIGFYILLAGVLMLTHIQVLESLLVTTENTSIIGMSWTLFFDYVNGTGTLVQTGGGMIGAILFTFSHYMFSITGSKIVVVFCLLIGAIFLTNLSIGEVASKLFARVKAVSNIAIEKWTQYQTERRERKQQAYMDDESRQAVNESEDNMVTEIEVSEREEPFINDFTDVAYQNNATQATENKSPAKQAQSIKSDQEGQSDHSAEDSKDEAMPMTARENHDYELPMPDLLADPSYNSQQQEKSQIQATVRKLEKTFTSFGVKAKITKVHVGPAVTKYEVYPEAGVKVSKIVNLHDDIALALAAKDIRIEAPIPGKSAVGIEVPNKEIAMVSLREVLDKTWSNKTSKLLYALGRDISGEAVVGELNKMPHLLIAGATGSGKSVCVNGIITSILMRAKPHEVKMMMIDPKKVELNVYNGIPHLLAPVVTDPKKASRALKKVVAEMERRYDLFSETGTRNIEGYNEYIRKQNLASEDQQPHLPYIVVLVDELADLMMVASNDVEDSITRLAQMARAAGIHLIIATQRPSVDVITGVIKANIPSRIAFSVSSATDSRTILDSGGAEKLLGRGDMLFMPVGSSKPTRVQGAFLSDEEVERIVDHCVEQQKATYQEEMIPEETNEVVEDVDDDLFEDAVQLISEMQSASVSMLQRRFRIGYTRAARLIDAMEDRGIVGPYEGSKPRSVLVPKPTEEQTTSS</sequence>